<dbReference type="EMBL" id="M96433">
    <property type="protein sequence ID" value="AAA16467.1"/>
    <property type="molecule type" value="Unassigned_DNA"/>
</dbReference>
<dbReference type="EMBL" id="AY305378">
    <property type="protein sequence ID" value="AAP85763.1"/>
    <property type="molecule type" value="Genomic_DNA"/>
</dbReference>
<dbReference type="PIR" id="G43255">
    <property type="entry name" value="G43255"/>
</dbReference>
<dbReference type="RefSeq" id="WP_011153932.1">
    <property type="nucleotide sequence ID" value="NC_005241.1"/>
</dbReference>
<dbReference type="SMR" id="P31910"/>
<dbReference type="KEGG" id="reh:PHG007"/>
<dbReference type="PATRIC" id="fig|381666.6.peg.6"/>
<dbReference type="eggNOG" id="COG0526">
    <property type="taxonomic scope" value="Bacteria"/>
</dbReference>
<dbReference type="HOGENOM" id="CLU_144855_0_1_4"/>
<dbReference type="OrthoDB" id="6560050at2"/>
<dbReference type="Proteomes" id="UP000008210">
    <property type="component" value="Plasmid megaplasmid pHG1"/>
</dbReference>
<dbReference type="CDD" id="cd02965">
    <property type="entry name" value="HyaE"/>
    <property type="match status" value="1"/>
</dbReference>
<dbReference type="Gene3D" id="3.40.30.10">
    <property type="entry name" value="Glutaredoxin"/>
    <property type="match status" value="1"/>
</dbReference>
<dbReference type="InterPro" id="IPR010893">
    <property type="entry name" value="NiFe-hyd_mat_HyaE"/>
</dbReference>
<dbReference type="InterPro" id="IPR036249">
    <property type="entry name" value="Thioredoxin-like_sf"/>
</dbReference>
<dbReference type="Pfam" id="PF07449">
    <property type="entry name" value="HyaE"/>
    <property type="match status" value="1"/>
</dbReference>
<dbReference type="SUPFAM" id="SSF52833">
    <property type="entry name" value="Thioredoxin-like"/>
    <property type="match status" value="1"/>
</dbReference>
<gene>
    <name type="primary">hoxO</name>
    <name type="ordered locus">PHG007</name>
</gene>
<reference key="1">
    <citation type="journal article" date="1992" name="J. Bacteriol.">
        <title>A gene complex coding for the membrane-bound hydrogenase of Alcaligenes eutrophus H16.</title>
        <authorList>
            <person name="Kortlueke C."/>
            <person name="Horstmann K."/>
            <person name="Schwartz E."/>
            <person name="Rohde M."/>
            <person name="Binsack R."/>
            <person name="Friedrich B."/>
        </authorList>
    </citation>
    <scope>NUCLEOTIDE SEQUENCE [GENOMIC DNA]</scope>
</reference>
<reference key="2">
    <citation type="journal article" date="2003" name="J. Mol. Biol.">
        <title>Complete nucleotide sequence of pHG1: a Ralstonia eutropha H16 megaplasmid encoding key enzymes of H(2)-based lithoautotrophy and anaerobiosis.</title>
        <authorList>
            <person name="Schwartz E."/>
            <person name="Henne A."/>
            <person name="Cramm R."/>
            <person name="Eitinger T."/>
            <person name="Friedrich B."/>
            <person name="Gottschalk G."/>
        </authorList>
    </citation>
    <scope>NUCLEOTIDE SEQUENCE [LARGE SCALE GENOMIC DNA]</scope>
    <source>
        <strain>ATCC 17699 / DSM 428 / KCTC 22496 / NCIMB 10442 / H16 / Stanier 337</strain>
    </source>
</reference>
<name>HOXO_CUPNH</name>
<keyword id="KW-0614">Plasmid</keyword>
<keyword id="KW-1185">Reference proteome</keyword>
<accession>P31910</accession>
<sequence length="161" mass="17719">MSTESAMFLAPIPTTDAVPPVIERLVEQHQAAWVDQDSIDDWLAGGGDCVLFIAGDPVRFPECVDVAVVLPELQRVFFNGFRIGVAKREREHEDVLANRFGTQRRPSLVFLRDGAYVSVIAGMRDWDEYVREVRRALAMPTSRPPSIGIPVISAAAGGSCH</sequence>
<protein>
    <recommendedName>
        <fullName>Hydrogenase expression/formation protein HoxO</fullName>
    </recommendedName>
</protein>
<geneLocation type="plasmid">
    <name>megaplasmid pHG1</name>
</geneLocation>
<evidence type="ECO:0000305" key="1"/>
<proteinExistence type="inferred from homology"/>
<feature type="chain" id="PRO_0000201409" description="Hydrogenase expression/formation protein HoxO">
    <location>
        <begin position="1"/>
        <end position="161"/>
    </location>
</feature>
<organism>
    <name type="scientific">Cupriavidus necator (strain ATCC 17699 / DSM 428 / KCTC 22496 / NCIMB 10442 / H16 / Stanier 337)</name>
    <name type="common">Ralstonia eutropha</name>
    <dbReference type="NCBI Taxonomy" id="381666"/>
    <lineage>
        <taxon>Bacteria</taxon>
        <taxon>Pseudomonadati</taxon>
        <taxon>Pseudomonadota</taxon>
        <taxon>Betaproteobacteria</taxon>
        <taxon>Burkholderiales</taxon>
        <taxon>Burkholderiaceae</taxon>
        <taxon>Cupriavidus</taxon>
    </lineage>
</organism>
<comment type="similarity">
    <text evidence="1">Belongs to the HupG/HyaE family.</text>
</comment>